<protein>
    <recommendedName>
        <fullName>Vacuolar protein sorting/targeting protein 10</fullName>
    </recommendedName>
    <alternativeName>
        <fullName>Carboxypeptidase Y receptor</fullName>
        <shortName>CPY receptor</shortName>
    </alternativeName>
    <alternativeName>
        <fullName>Sortilin VPS10</fullName>
    </alternativeName>
    <alternativeName>
        <fullName>Vacuolar carboxypeptidase sorting receptor VPS10</fullName>
    </alternativeName>
</protein>
<accession>C4Y3C1</accession>
<reference key="1">
    <citation type="journal article" date="2009" name="Nature">
        <title>Evolution of pathogenicity and sexual reproduction in eight Candida genomes.</title>
        <authorList>
            <person name="Butler G."/>
            <person name="Rasmussen M.D."/>
            <person name="Lin M.F."/>
            <person name="Santos M.A.S."/>
            <person name="Sakthikumar S."/>
            <person name="Munro C.A."/>
            <person name="Rheinbay E."/>
            <person name="Grabherr M."/>
            <person name="Forche A."/>
            <person name="Reedy J.L."/>
            <person name="Agrafioti I."/>
            <person name="Arnaud M.B."/>
            <person name="Bates S."/>
            <person name="Brown A.J.P."/>
            <person name="Brunke S."/>
            <person name="Costanzo M.C."/>
            <person name="Fitzpatrick D.A."/>
            <person name="de Groot P.W.J."/>
            <person name="Harris D."/>
            <person name="Hoyer L.L."/>
            <person name="Hube B."/>
            <person name="Klis F.M."/>
            <person name="Kodira C."/>
            <person name="Lennard N."/>
            <person name="Logue M.E."/>
            <person name="Martin R."/>
            <person name="Neiman A.M."/>
            <person name="Nikolaou E."/>
            <person name="Quail M.A."/>
            <person name="Quinn J."/>
            <person name="Santos M.C."/>
            <person name="Schmitzberger F.F."/>
            <person name="Sherlock G."/>
            <person name="Shah P."/>
            <person name="Silverstein K.A.T."/>
            <person name="Skrzypek M.S."/>
            <person name="Soll D."/>
            <person name="Staggs R."/>
            <person name="Stansfield I."/>
            <person name="Stumpf M.P.H."/>
            <person name="Sudbery P.E."/>
            <person name="Srikantha T."/>
            <person name="Zeng Q."/>
            <person name="Berman J."/>
            <person name="Berriman M."/>
            <person name="Heitman J."/>
            <person name="Gow N.A.R."/>
            <person name="Lorenz M.C."/>
            <person name="Birren B.W."/>
            <person name="Kellis M."/>
            <person name="Cuomo C.A."/>
        </authorList>
    </citation>
    <scope>NUCLEOTIDE SEQUENCE [LARGE SCALE GENOMIC DNA]</scope>
    <source>
        <strain>ATCC 42720</strain>
    </source>
</reference>
<comment type="function">
    <text evidence="1">Functions as a sorting receptor in the Golgi compartment required for the intracellular sorting and delivery of soluble vacuolar proteins, like carboxypeptidase Y (CPY) and proteinase A. Executes multiple rounds of sorting by cycling between the late Golgi and a prevacuolar endosome-like compartment (By similarity).</text>
</comment>
<comment type="subcellular location">
    <subcellularLocation>
        <location evidence="1">Golgi apparatus</location>
        <location evidence="1">trans-Golgi network membrane</location>
        <topology evidence="1">Multi-pass membrane protein</topology>
    </subcellularLocation>
    <subcellularLocation>
        <location evidence="1">Prevacuolar compartment membrane</location>
        <topology evidence="1">Multi-pass membrane protein</topology>
    </subcellularLocation>
    <text evidence="1">Cycles between the Golgi apparatus and the prevacuolar compartment.</text>
</comment>
<comment type="similarity">
    <text evidence="4">Belongs to the VPS10-related sortilin family.</text>
</comment>
<proteinExistence type="inferred from homology"/>
<name>VPS10_CLAL4</name>
<evidence type="ECO:0000250" key="1"/>
<evidence type="ECO:0000255" key="2"/>
<evidence type="ECO:0000256" key="3">
    <source>
        <dbReference type="SAM" id="MobiDB-lite"/>
    </source>
</evidence>
<evidence type="ECO:0000305" key="4"/>
<gene>
    <name type="primary">VPS10</name>
    <name type="ORF">CLUG_03034</name>
</gene>
<keyword id="KW-0325">Glycoprotein</keyword>
<keyword id="KW-0333">Golgi apparatus</keyword>
<keyword id="KW-0472">Membrane</keyword>
<keyword id="KW-0653">Protein transport</keyword>
<keyword id="KW-0675">Receptor</keyword>
<keyword id="KW-1185">Reference proteome</keyword>
<keyword id="KW-0677">Repeat</keyword>
<keyword id="KW-0732">Signal</keyword>
<keyword id="KW-0812">Transmembrane</keyword>
<keyword id="KW-1133">Transmembrane helix</keyword>
<keyword id="KW-0813">Transport</keyword>
<sequence>MNLRASCIAAFLCLLVQLCAADFSPEVTHRIVKGIGWDISYFEDSSNVIHVGEKMVEMSYDDGVTWTEIETIGKSSDILVKFDPINVNRAFVFSRIGDTHFVTDDKGKTWRSFKVQPKKSLKDRELGMHHVFNFKDDSVLIKLEYCKQYPEADDCDVSYFYSSNSLKSDPQLLPIDAKVCVVNTLLDEPTILCVKDTRNSFGHVVKSELVSSKDLFKTSESIKHPGFDSGRIIDVRLESSFLVVVTQKDRFNELSSISISVSKDGKTFDTADLAFQMAYGAIRFLPSDPQSLFLTVAASTSKDTRPQGTLYSSDSSGLHFKKLLDNVDLGYSARVEYVHGVWLAKTFEEDPIVEPNDDYFGSPIAKTSSHISIDNGLTWNKLEILNDDSCKLKDGCSLNLLRFDAIEDKNKYVTGPTPNILMGFGITGNTDNFFKAKTYISRDGGLTWTNVFSGPGIHAFGDQGNVIMYVPFSGRNHGPATEVRYSLNQGRSWGTYKLKEPCFPQELITTTDGTNTKFVLSGIVEHQQMSEVLYAFDFSKAFDGNKCKDSDMEKVYARVSPKDGQPNCIYGFKESFMRRKADARCFIDRTFEDVKVDVEQCPCTQQDYECSPYFKLSEKGVCVPDPKKIAEKCKSESKDTLKLPDMQIVAENKCEQKSDSSFVTETEFKCKDFTGENVPSSITIGQSEFDGFLSQYSYVATGPDLSDNLIVKTDTGLIYASNNGGTSFVRVPFKEKIRGFYVGPSLGRVIMITDGDVFYASNNGANTFYKYKVPTSASNGDVTISFHPTDESRFIWLSGNCAVGSSTCVAYHTEDFGRSFEKLIDNAMACDYVSPVLDITSTELIYCTVVDGNKKKLASSTNYFKEAEIEYVLDDIVAYAIKSNFVVVATLDEAHTMLKAKVTADGFVFADVDFPSDFKIEAQTAFTILESSPHSIFMHVTTDSTSGHEKGAILKSNSNGTYYVLSLSDVNRNEVGYVDYDRLGLLEGVLIANTATDSKEGKNKKTQISFNDGSQWNYIAPPAVDSDGKEYACKGQPLSKCSLHLHGFTERPDYRDTFSSGSAVGLLIGMGNVGEYLKPVTDDQTAAFMSADGGLTWKEIKKGVYHWDFGDQGTILLLVDAAKDTDEFIFSKDEGATWETMKFASSPVKVLDLATVPSDTSLKFVIFAGSHQSQSSTQLFAVDFSQFFPRQCQVDLENPESDDFEYWTPMHPESTERCLFGHEAMYLRRAAGHDDCFIGSTPLDQGYKMVRNCTCTRNDYECDYNYFRDNDGTCKLVKGMNAANRMAEMCRKPGVFEYFEPTGYRKIPLSTCVGGKQFDALKPRACPGHEKEFNEAHGRDVGGSKIFILIFIPLLVFFSAVFFVYDRGIRRNGGFQKLGQIRLDDGDDDFNPIEENIVDVVVNKTVRGAIVVAAGTFAVFKTIRKIDRAMFDKVTSLLFGRRPGQRNYVRVPDDEDELFGTFDENYEDELNEAADVDFNVDEEPEEFTELTAEPANVDERLFDIDDQSEDDAVSAEHPEPESTHE</sequence>
<feature type="signal peptide" evidence="2">
    <location>
        <begin position="1"/>
        <end position="21"/>
    </location>
</feature>
<feature type="chain" id="PRO_0000407513" description="Vacuolar protein sorting/targeting protein 10">
    <location>
        <begin position="22"/>
        <end position="1525"/>
    </location>
</feature>
<feature type="topological domain" description="Lumenal" evidence="2">
    <location>
        <begin position="22"/>
        <end position="1345"/>
    </location>
</feature>
<feature type="transmembrane region" description="Helical" evidence="2">
    <location>
        <begin position="1346"/>
        <end position="1366"/>
    </location>
</feature>
<feature type="topological domain" description="Cytoplasmic" evidence="2">
    <location>
        <begin position="1367"/>
        <end position="1399"/>
    </location>
</feature>
<feature type="transmembrane region" description="Helical" evidence="2">
    <location>
        <begin position="1400"/>
        <end position="1420"/>
    </location>
</feature>
<feature type="topological domain" description="Lumenal" evidence="2">
    <location>
        <begin position="1421"/>
        <end position="1525"/>
    </location>
</feature>
<feature type="repeat" description="BNR 1">
    <location>
        <begin position="58"/>
        <end position="67"/>
    </location>
</feature>
<feature type="repeat" description="BNR 2">
    <location>
        <begin position="101"/>
        <end position="111"/>
    </location>
</feature>
<feature type="repeat" description="BNR 3">
    <location>
        <begin position="371"/>
        <end position="380"/>
    </location>
</feature>
<feature type="repeat" description="BNR 4">
    <location>
        <begin position="439"/>
        <end position="449"/>
    </location>
</feature>
<feature type="repeat" description="BNR 5">
    <location>
        <begin position="484"/>
        <end position="493"/>
    </location>
</feature>
<feature type="repeat" description="BNR 6">
    <location>
        <begin position="1088"/>
        <end position="1098"/>
    </location>
</feature>
<feature type="repeat" description="BNR 7">
    <location>
        <begin position="1130"/>
        <end position="1139"/>
    </location>
</feature>
<feature type="region of interest" description="Disordered" evidence="3">
    <location>
        <begin position="1503"/>
        <end position="1525"/>
    </location>
</feature>
<feature type="compositionally biased region" description="Acidic residues" evidence="3">
    <location>
        <begin position="1504"/>
        <end position="1513"/>
    </location>
</feature>
<feature type="compositionally biased region" description="Basic and acidic residues" evidence="3">
    <location>
        <begin position="1514"/>
        <end position="1525"/>
    </location>
</feature>
<feature type="glycosylation site" description="N-linked (GlcNAc...) asparagine" evidence="2">
    <location>
        <position position="959"/>
    </location>
</feature>
<feature type="glycosylation site" description="N-linked (GlcNAc...) asparagine" evidence="2">
    <location>
        <position position="1252"/>
    </location>
</feature>
<organism>
    <name type="scientific">Clavispora lusitaniae (strain ATCC 42720)</name>
    <name type="common">Yeast</name>
    <name type="synonym">Candida lusitaniae</name>
    <dbReference type="NCBI Taxonomy" id="306902"/>
    <lineage>
        <taxon>Eukaryota</taxon>
        <taxon>Fungi</taxon>
        <taxon>Dikarya</taxon>
        <taxon>Ascomycota</taxon>
        <taxon>Saccharomycotina</taxon>
        <taxon>Pichiomycetes</taxon>
        <taxon>Metschnikowiaceae</taxon>
        <taxon>Clavispora</taxon>
    </lineage>
</organism>
<dbReference type="EMBL" id="CH408078">
    <property type="protein sequence ID" value="EEQ38908.1"/>
    <property type="molecule type" value="Genomic_DNA"/>
</dbReference>
<dbReference type="RefSeq" id="XP_002617590.1">
    <property type="nucleotide sequence ID" value="XM_002617544.1"/>
</dbReference>
<dbReference type="SMR" id="C4Y3C1"/>
<dbReference type="FunCoup" id="C4Y3C1">
    <property type="interactions" value="202"/>
</dbReference>
<dbReference type="STRING" id="306902.C4Y3C1"/>
<dbReference type="GlyCosmos" id="C4Y3C1">
    <property type="glycosylation" value="2 sites, No reported glycans"/>
</dbReference>
<dbReference type="GeneID" id="8498263"/>
<dbReference type="KEGG" id="clu:CLUG_03034"/>
<dbReference type="VEuPathDB" id="FungiDB:CLUG_03034"/>
<dbReference type="HOGENOM" id="CLU_000700_0_1_1"/>
<dbReference type="InParanoid" id="C4Y3C1"/>
<dbReference type="OMA" id="ECDYNYY"/>
<dbReference type="OrthoDB" id="7053at4891"/>
<dbReference type="Proteomes" id="UP000007703">
    <property type="component" value="Unassembled WGS sequence"/>
</dbReference>
<dbReference type="GO" id="GO:0005829">
    <property type="term" value="C:cytosol"/>
    <property type="evidence" value="ECO:0007669"/>
    <property type="project" value="GOC"/>
</dbReference>
<dbReference type="GO" id="GO:0005794">
    <property type="term" value="C:Golgi apparatus"/>
    <property type="evidence" value="ECO:0007669"/>
    <property type="project" value="UniProtKB-SubCell"/>
</dbReference>
<dbReference type="GO" id="GO:0016020">
    <property type="term" value="C:membrane"/>
    <property type="evidence" value="ECO:0007669"/>
    <property type="project" value="UniProtKB-KW"/>
</dbReference>
<dbReference type="GO" id="GO:0006895">
    <property type="term" value="P:Golgi to endosome transport"/>
    <property type="evidence" value="ECO:0007669"/>
    <property type="project" value="TreeGrafter"/>
</dbReference>
<dbReference type="GO" id="GO:0006896">
    <property type="term" value="P:Golgi to vacuole transport"/>
    <property type="evidence" value="ECO:0007669"/>
    <property type="project" value="TreeGrafter"/>
</dbReference>
<dbReference type="GO" id="GO:0006623">
    <property type="term" value="P:protein targeting to vacuole"/>
    <property type="evidence" value="ECO:0007669"/>
    <property type="project" value="TreeGrafter"/>
</dbReference>
<dbReference type="CDD" id="cd15482">
    <property type="entry name" value="Sialidase_non-viral"/>
    <property type="match status" value="1"/>
</dbReference>
<dbReference type="FunFam" id="3.30.60.270:FF:000005">
    <property type="entry name" value="Sortilin"/>
    <property type="match status" value="1"/>
</dbReference>
<dbReference type="Gene3D" id="2.10.70.80">
    <property type="match status" value="2"/>
</dbReference>
<dbReference type="Gene3D" id="3.30.60.270">
    <property type="match status" value="1"/>
</dbReference>
<dbReference type="Gene3D" id="2.130.10.10">
    <property type="entry name" value="YVTN repeat-like/Quinoprotein amine dehydrogenase"/>
    <property type="match status" value="3"/>
</dbReference>
<dbReference type="InterPro" id="IPR036278">
    <property type="entry name" value="Sialidase_sf"/>
</dbReference>
<dbReference type="InterPro" id="IPR031777">
    <property type="entry name" value="Sortilin_C"/>
</dbReference>
<dbReference type="InterPro" id="IPR031778">
    <property type="entry name" value="Sortilin_N"/>
</dbReference>
<dbReference type="InterPro" id="IPR006581">
    <property type="entry name" value="VPS10"/>
</dbReference>
<dbReference type="InterPro" id="IPR050310">
    <property type="entry name" value="VPS10-sortilin"/>
</dbReference>
<dbReference type="InterPro" id="IPR015943">
    <property type="entry name" value="WD40/YVTN_repeat-like_dom_sf"/>
</dbReference>
<dbReference type="PANTHER" id="PTHR12106">
    <property type="entry name" value="SORTILIN RELATED"/>
    <property type="match status" value="1"/>
</dbReference>
<dbReference type="PANTHER" id="PTHR12106:SF27">
    <property type="entry name" value="SORTILIN-RELATED RECEPTOR"/>
    <property type="match status" value="1"/>
</dbReference>
<dbReference type="Pfam" id="PF15902">
    <property type="entry name" value="Sortilin-Vps10"/>
    <property type="match status" value="2"/>
</dbReference>
<dbReference type="Pfam" id="PF15901">
    <property type="entry name" value="Sortilin_C"/>
    <property type="match status" value="2"/>
</dbReference>
<dbReference type="SMART" id="SM00602">
    <property type="entry name" value="VPS10"/>
    <property type="match status" value="2"/>
</dbReference>
<dbReference type="SUPFAM" id="SSF110296">
    <property type="entry name" value="Oligoxyloglucan reducing end-specific cellobiohydrolase"/>
    <property type="match status" value="2"/>
</dbReference>
<dbReference type="SUPFAM" id="SSF50939">
    <property type="entry name" value="Sialidases"/>
    <property type="match status" value="1"/>
</dbReference>